<proteinExistence type="inferred from homology"/>
<keyword id="KW-0049">Antioxidant</keyword>
<keyword id="KW-1015">Disulfide bond</keyword>
<keyword id="KW-0560">Oxidoreductase</keyword>
<keyword id="KW-0575">Peroxidase</keyword>
<keyword id="KW-0676">Redox-active center</keyword>
<reference key="1">
    <citation type="journal article" date="2002" name="Mol. Microbiol.">
        <title>Genome sequence of Streptococcus agalactiae, a pathogen causing invasive neonatal disease.</title>
        <authorList>
            <person name="Glaser P."/>
            <person name="Rusniok C."/>
            <person name="Buchrieser C."/>
            <person name="Chevalier F."/>
            <person name="Frangeul L."/>
            <person name="Msadek T."/>
            <person name="Zouine M."/>
            <person name="Couve E."/>
            <person name="Lalioui L."/>
            <person name="Poyart C."/>
            <person name="Trieu-Cuot P."/>
            <person name="Kunst F."/>
        </authorList>
    </citation>
    <scope>NUCLEOTIDE SEQUENCE [LARGE SCALE GENOMIC DNA]</scope>
    <source>
        <strain>NEM316</strain>
    </source>
</reference>
<name>TPX_STRA3</name>
<feature type="chain" id="PRO_0000187908" description="Thiol peroxidase">
    <location>
        <begin position="1"/>
        <end position="164"/>
    </location>
</feature>
<feature type="domain" description="Thioredoxin" evidence="1">
    <location>
        <begin position="16"/>
        <end position="162"/>
    </location>
</feature>
<feature type="active site" description="Cysteine sulfenic acid (-SOH) intermediate" evidence="1">
    <location>
        <position position="58"/>
    </location>
</feature>
<feature type="disulfide bond" description="Redox-active" evidence="1">
    <location>
        <begin position="58"/>
        <end position="92"/>
    </location>
</feature>
<accession>Q8E536</accession>
<gene>
    <name evidence="1" type="primary">tpx</name>
    <name type="ordered locus">gbs1198</name>
</gene>
<comment type="function">
    <text evidence="1">Thiol-specific peroxidase that catalyzes the reduction of hydrogen peroxide and organic hydroperoxides to water and alcohols, respectively. Plays a role in cell protection against oxidative stress by detoxifying peroxides.</text>
</comment>
<comment type="catalytic activity">
    <reaction evidence="1">
        <text>a hydroperoxide + [thioredoxin]-dithiol = an alcohol + [thioredoxin]-disulfide + H2O</text>
        <dbReference type="Rhea" id="RHEA:62620"/>
        <dbReference type="Rhea" id="RHEA-COMP:10698"/>
        <dbReference type="Rhea" id="RHEA-COMP:10700"/>
        <dbReference type="ChEBI" id="CHEBI:15377"/>
        <dbReference type="ChEBI" id="CHEBI:29950"/>
        <dbReference type="ChEBI" id="CHEBI:30879"/>
        <dbReference type="ChEBI" id="CHEBI:35924"/>
        <dbReference type="ChEBI" id="CHEBI:50058"/>
        <dbReference type="EC" id="1.11.1.24"/>
    </reaction>
</comment>
<comment type="subunit">
    <text evidence="1">Homodimer.</text>
</comment>
<comment type="miscellaneous">
    <text evidence="1">The active site is a conserved redox-active cysteine residue, the peroxidatic cysteine (C(P)), which makes the nucleophilic attack on the peroxide substrate. The peroxide oxidizes the C(P)-SH to cysteine sulfenic acid (C(P)-SOH), which then reacts with another cysteine residue, the resolving cysteine (C(R)), to form a disulfide bridge. The disulfide is subsequently reduced by an appropriate electron donor to complete the catalytic cycle. In this atypical 2-Cys peroxiredoxin, C(R) is present in the same subunit to form an intramolecular disulfide. The disulfide is subsequently reduced by thioredoxin.</text>
</comment>
<comment type="similarity">
    <text evidence="1">Belongs to the peroxiredoxin family. Tpx subfamily.</text>
</comment>
<sequence>MTTFLGNSVTFTGKQLQVGDIAKDFLLIATDLSQKSLKDFEGKKKVISVVPSIDTGICSKQTRTFNEELSELDNTVVITVSMDLPFAQKRWCSAEGLDNVILLSDFYDHSFGQDYALLMNEWHLLTRAVLILDEHNKVTYTEYVDNVNSDVDYEAAINAAKILP</sequence>
<dbReference type="EC" id="1.11.1.24" evidence="1"/>
<dbReference type="EMBL" id="AL766849">
    <property type="protein sequence ID" value="CAD46857.1"/>
    <property type="molecule type" value="Genomic_DNA"/>
</dbReference>
<dbReference type="RefSeq" id="WP_000206547.1">
    <property type="nucleotide sequence ID" value="NC_004368.1"/>
</dbReference>
<dbReference type="SMR" id="Q8E536"/>
<dbReference type="KEGG" id="san:gbs1198"/>
<dbReference type="eggNOG" id="COG2077">
    <property type="taxonomic scope" value="Bacteria"/>
</dbReference>
<dbReference type="HOGENOM" id="CLU_042529_12_0_9"/>
<dbReference type="Proteomes" id="UP000000823">
    <property type="component" value="Chromosome"/>
</dbReference>
<dbReference type="GO" id="GO:0008379">
    <property type="term" value="F:thioredoxin peroxidase activity"/>
    <property type="evidence" value="ECO:0007669"/>
    <property type="project" value="UniProtKB-UniRule"/>
</dbReference>
<dbReference type="CDD" id="cd03014">
    <property type="entry name" value="PRX_Atyp2cys"/>
    <property type="match status" value="1"/>
</dbReference>
<dbReference type="Gene3D" id="3.40.30.10">
    <property type="entry name" value="Glutaredoxin"/>
    <property type="match status" value="1"/>
</dbReference>
<dbReference type="HAMAP" id="MF_00269">
    <property type="entry name" value="Tpx"/>
    <property type="match status" value="1"/>
</dbReference>
<dbReference type="InterPro" id="IPR013740">
    <property type="entry name" value="Redoxin"/>
</dbReference>
<dbReference type="InterPro" id="IPR036249">
    <property type="entry name" value="Thioredoxin-like_sf"/>
</dbReference>
<dbReference type="InterPro" id="IPR013766">
    <property type="entry name" value="Thioredoxin_domain"/>
</dbReference>
<dbReference type="InterPro" id="IPR002065">
    <property type="entry name" value="TPX"/>
</dbReference>
<dbReference type="InterPro" id="IPR018219">
    <property type="entry name" value="Tpx_CS"/>
</dbReference>
<dbReference type="InterPro" id="IPR050455">
    <property type="entry name" value="Tpx_Peroxidase_subfamily"/>
</dbReference>
<dbReference type="NCBIfam" id="NF001808">
    <property type="entry name" value="PRK00522.1"/>
    <property type="match status" value="1"/>
</dbReference>
<dbReference type="PANTHER" id="PTHR43110">
    <property type="entry name" value="THIOL PEROXIDASE"/>
    <property type="match status" value="1"/>
</dbReference>
<dbReference type="PANTHER" id="PTHR43110:SF1">
    <property type="entry name" value="THIOL PEROXIDASE"/>
    <property type="match status" value="1"/>
</dbReference>
<dbReference type="Pfam" id="PF08534">
    <property type="entry name" value="Redoxin"/>
    <property type="match status" value="1"/>
</dbReference>
<dbReference type="SUPFAM" id="SSF52833">
    <property type="entry name" value="Thioredoxin-like"/>
    <property type="match status" value="1"/>
</dbReference>
<dbReference type="PROSITE" id="PS51352">
    <property type="entry name" value="THIOREDOXIN_2"/>
    <property type="match status" value="1"/>
</dbReference>
<dbReference type="PROSITE" id="PS01265">
    <property type="entry name" value="TPX"/>
    <property type="match status" value="1"/>
</dbReference>
<organism>
    <name type="scientific">Streptococcus agalactiae serotype III (strain NEM316)</name>
    <dbReference type="NCBI Taxonomy" id="211110"/>
    <lineage>
        <taxon>Bacteria</taxon>
        <taxon>Bacillati</taxon>
        <taxon>Bacillota</taxon>
        <taxon>Bacilli</taxon>
        <taxon>Lactobacillales</taxon>
        <taxon>Streptococcaceae</taxon>
        <taxon>Streptococcus</taxon>
    </lineage>
</organism>
<evidence type="ECO:0000255" key="1">
    <source>
        <dbReference type="HAMAP-Rule" id="MF_00269"/>
    </source>
</evidence>
<protein>
    <recommendedName>
        <fullName evidence="1">Thiol peroxidase</fullName>
        <shortName evidence="1">Tpx</shortName>
        <ecNumber evidence="1">1.11.1.24</ecNumber>
    </recommendedName>
    <alternativeName>
        <fullName evidence="1">Peroxiredoxin tpx</fullName>
        <shortName evidence="1">Prx</shortName>
    </alternativeName>
    <alternativeName>
        <fullName evidence="1">Thioredoxin peroxidase</fullName>
    </alternativeName>
    <alternativeName>
        <fullName evidence="1">Thioredoxin-dependent peroxiredoxin</fullName>
    </alternativeName>
</protein>